<keyword id="KW-0217">Developmental protein</keyword>
<keyword id="KW-0221">Differentiation</keyword>
<keyword id="KW-0896">Oogenesis</keyword>
<keyword id="KW-1185">Reference proteome</keyword>
<keyword id="KW-0694">RNA-binding</keyword>
<keyword id="KW-0810">Translation regulation</keyword>
<name>DAZ1_CAEEL</name>
<sequence>MMSPPLRYQKDQQNQQHQQNQSQQAAHQMVSFMPQTPTSLPSTPIQLYPTGAAALIPAPPTYELIPNRIFVGGFPTSTTETELREHFEKFFAVKDVKMVKSLDGQSKGYGFITFETEDQAEEIRKLTPKQLEFRSRKLNLGPAIRKINSNSFQPSYAIATPSQLVAASPGPFSYAIPASPSPYSGYSYPASPQMFVYPPLRSQDQSRQQSEQQTTPQNSPTNLQHQQSPQVFFGGDQDPIRSYASAVAGVEKSEVSPEKHESVSPQPLLPNQNVLNTQYSQGQQQWNSNVQQQQQQQMDSNNGGPYYNENYSQGYTRPHPYQQFAQSGVYMNSQGMYHSSYSYMTPPLAPGQYPQMMSAPYWQQQQQHHQSHAYAGYNPAYNNWVGPSGDMNQFKQNPSNYFYQNYPGNFSQQHTMGNNENTFSLPLQAPRQGKKSRKPSECQDKKTKSPIKGARTERPSSSASTPDAKYQKNHRYPVHLSPLSASLQSLAISSPTKNN</sequence>
<protein>
    <recommendedName>
        <fullName>DAZ protein 1</fullName>
    </recommendedName>
</protein>
<dbReference type="EMBL" id="AB025253">
    <property type="protein sequence ID" value="BAA88577.1"/>
    <property type="molecule type" value="mRNA"/>
</dbReference>
<dbReference type="EMBL" id="FO081078">
    <property type="protein sequence ID" value="CCD68962.1"/>
    <property type="status" value="ALT_INIT"/>
    <property type="molecule type" value="Genomic_DNA"/>
</dbReference>
<dbReference type="RefSeq" id="NP_495036.3">
    <property type="nucleotide sequence ID" value="NM_062635.4"/>
</dbReference>
<dbReference type="SMR" id="Q20870"/>
<dbReference type="BioGRID" id="39275">
    <property type="interactions" value="3"/>
</dbReference>
<dbReference type="FunCoup" id="Q20870">
    <property type="interactions" value="236"/>
</dbReference>
<dbReference type="STRING" id="6239.F56D1.7.1"/>
<dbReference type="iPTMnet" id="Q20870"/>
<dbReference type="PaxDb" id="6239-F56D1.7"/>
<dbReference type="PeptideAtlas" id="Q20870"/>
<dbReference type="EnsemblMetazoa" id="F56D1.7.1">
    <property type="protein sequence ID" value="F56D1.7.1"/>
    <property type="gene ID" value="WBGene00000935"/>
</dbReference>
<dbReference type="GeneID" id="173931"/>
<dbReference type="KEGG" id="cel:CELE_F56D1.7"/>
<dbReference type="UCSC" id="F56D1.7">
    <property type="organism name" value="c. elegans"/>
</dbReference>
<dbReference type="AGR" id="WB:WBGene00000935"/>
<dbReference type="CTD" id="173931"/>
<dbReference type="WormBase" id="F56D1.7">
    <property type="protein sequence ID" value="CE27175"/>
    <property type="gene ID" value="WBGene00000935"/>
    <property type="gene designation" value="daz-1"/>
</dbReference>
<dbReference type="eggNOG" id="KOG0118">
    <property type="taxonomic scope" value="Eukaryota"/>
</dbReference>
<dbReference type="GeneTree" id="ENSGT00530000063480"/>
<dbReference type="HOGENOM" id="CLU_504562_0_0_1"/>
<dbReference type="InParanoid" id="Q20870"/>
<dbReference type="OrthoDB" id="762982at2759"/>
<dbReference type="PRO" id="PR:Q20870"/>
<dbReference type="Proteomes" id="UP000001940">
    <property type="component" value="Chromosome II"/>
</dbReference>
<dbReference type="Bgee" id="WBGene00000935">
    <property type="expression patterns" value="Expressed in germ line (C elegans) and 5 other cell types or tissues"/>
</dbReference>
<dbReference type="GO" id="GO:0005737">
    <property type="term" value="C:cytoplasm"/>
    <property type="evidence" value="ECO:0000314"/>
    <property type="project" value="WormBase"/>
</dbReference>
<dbReference type="GO" id="GO:0003730">
    <property type="term" value="F:mRNA 3'-UTR binding"/>
    <property type="evidence" value="ECO:0000318"/>
    <property type="project" value="GO_Central"/>
</dbReference>
<dbReference type="GO" id="GO:0008494">
    <property type="term" value="F:translation activator activity"/>
    <property type="evidence" value="ECO:0000318"/>
    <property type="project" value="GO_Central"/>
</dbReference>
<dbReference type="GO" id="GO:0070935">
    <property type="term" value="P:3'-UTR-mediated mRNA stabilization"/>
    <property type="evidence" value="ECO:0000318"/>
    <property type="project" value="GO_Central"/>
</dbReference>
<dbReference type="GO" id="GO:0048477">
    <property type="term" value="P:oogenesis"/>
    <property type="evidence" value="ECO:0007669"/>
    <property type="project" value="UniProtKB-KW"/>
</dbReference>
<dbReference type="GO" id="GO:0045948">
    <property type="term" value="P:positive regulation of translational initiation"/>
    <property type="evidence" value="ECO:0000318"/>
    <property type="project" value="GO_Central"/>
</dbReference>
<dbReference type="CDD" id="cd12412">
    <property type="entry name" value="RRM_DAZL_BOULE"/>
    <property type="match status" value="1"/>
</dbReference>
<dbReference type="Gene3D" id="3.30.70.330">
    <property type="match status" value="1"/>
</dbReference>
<dbReference type="InterPro" id="IPR034988">
    <property type="entry name" value="DAZ_BOULE_RRM"/>
</dbReference>
<dbReference type="InterPro" id="IPR043628">
    <property type="entry name" value="DAZ_dom"/>
</dbReference>
<dbReference type="InterPro" id="IPR012677">
    <property type="entry name" value="Nucleotide-bd_a/b_plait_sf"/>
</dbReference>
<dbReference type="InterPro" id="IPR035979">
    <property type="entry name" value="RBD_domain_sf"/>
</dbReference>
<dbReference type="InterPro" id="IPR000504">
    <property type="entry name" value="RRM_dom"/>
</dbReference>
<dbReference type="PANTHER" id="PTHR11176">
    <property type="entry name" value="BOULE-RELATED"/>
    <property type="match status" value="1"/>
</dbReference>
<dbReference type="PANTHER" id="PTHR11176:SF57">
    <property type="entry name" value="PROTEIN BOULE"/>
    <property type="match status" value="1"/>
</dbReference>
<dbReference type="Pfam" id="PF00076">
    <property type="entry name" value="RRM_1"/>
    <property type="match status" value="1"/>
</dbReference>
<dbReference type="SMART" id="SM00360">
    <property type="entry name" value="RRM"/>
    <property type="match status" value="1"/>
</dbReference>
<dbReference type="SUPFAM" id="SSF54928">
    <property type="entry name" value="RNA-binding domain, RBD"/>
    <property type="match status" value="1"/>
</dbReference>
<dbReference type="PROSITE" id="PS51890">
    <property type="entry name" value="DAZ"/>
    <property type="match status" value="1"/>
</dbReference>
<dbReference type="PROSITE" id="PS50102">
    <property type="entry name" value="RRM"/>
    <property type="match status" value="1"/>
</dbReference>
<accession>Q20870</accession>
<accession>Q9U5G2</accession>
<gene>
    <name type="primary">daz-1</name>
    <name type="ORF">F56D1.7</name>
</gene>
<comment type="function">
    <text evidence="4">RNA-binding protein that plays a central role in oogenesis, but not for spermatogenesis. Required for meiotic entry and germline differentiation, at the pachytene stage of meiosis I of female germline regardless of the sex of the soma. May act by regulating translation of specific mRNAs, possibly by binding to their 3'-UTR.</text>
</comment>
<comment type="tissue specificity">
    <text evidence="4">Germline specific. More strongly expressed during oogenesis than during spermatogenesis. During the larval stages, it is more abundant at the distal region than the proximal region of the gonad. In young adult hermaphrodites, it is expressed at a very low level in the distal mitotic region of the gonad, and begins to accumulate in the meiotic transition zone. Highly expressed in the proximal pachytene region. Not expressed in mature oocytes. Not expressed in the spermatheca. Weakly or not expressed in the germline of adult males.</text>
</comment>
<comment type="developmental stage">
    <text evidence="4">Expressed in the germline from the L2 stage larva.</text>
</comment>
<comment type="similarity">
    <text evidence="2">Belongs to the RRM DAZ family.</text>
</comment>
<comment type="caution">
    <text evidence="5">It is uncertain whether Met-1 or Met-2 is the initiator.</text>
</comment>
<comment type="sequence caution" evidence="5">
    <conflict type="erroneous initiation">
        <sequence resource="EMBL-CDS" id="CCD68962"/>
    </conflict>
    <text>Truncated N-terminus.</text>
</comment>
<reference key="1">
    <citation type="journal article" date="2000" name="Development">
        <title>Caenorhabditis elegans homologue of the human azoospermia factor DAZ is required for oogenesis but not for spermatogenesis.</title>
        <authorList>
            <person name="Karashima T."/>
            <person name="Sugimoto A."/>
            <person name="Yamamoto M."/>
        </authorList>
    </citation>
    <scope>NUCLEOTIDE SEQUENCE [MRNA]</scope>
    <scope>FUNCTION</scope>
    <scope>TISSUE SPECIFICITY</scope>
    <scope>DEVELOPMENTAL STAGE</scope>
    <source>
        <strain>Bristol N2</strain>
    </source>
</reference>
<reference key="2">
    <citation type="journal article" date="1998" name="Science">
        <title>Genome sequence of the nematode C. elegans: a platform for investigating biology.</title>
        <authorList>
            <consortium name="The C. elegans sequencing consortium"/>
        </authorList>
    </citation>
    <scope>NUCLEOTIDE SEQUENCE [LARGE SCALE GENOMIC DNA]</scope>
    <source>
        <strain>Bristol N2</strain>
    </source>
</reference>
<evidence type="ECO:0000255" key="1">
    <source>
        <dbReference type="PROSITE-ProRule" id="PRU00176"/>
    </source>
</evidence>
<evidence type="ECO:0000255" key="2">
    <source>
        <dbReference type="PROSITE-ProRule" id="PRU01238"/>
    </source>
</evidence>
<evidence type="ECO:0000256" key="3">
    <source>
        <dbReference type="SAM" id="MobiDB-lite"/>
    </source>
</evidence>
<evidence type="ECO:0000269" key="4">
    <source>
    </source>
</evidence>
<evidence type="ECO:0000305" key="5"/>
<feature type="chain" id="PRO_0000081564" description="DAZ protein 1">
    <location>
        <begin position="1"/>
        <end position="499"/>
    </location>
</feature>
<feature type="domain" description="RRM" evidence="1">
    <location>
        <begin position="66"/>
        <end position="144"/>
    </location>
</feature>
<feature type="domain" description="DAZ" evidence="2">
    <location>
        <begin position="214"/>
        <end position="236"/>
    </location>
</feature>
<feature type="region of interest" description="Disordered" evidence="3">
    <location>
        <begin position="1"/>
        <end position="29"/>
    </location>
</feature>
<feature type="region of interest" description="Disordered" evidence="3">
    <location>
        <begin position="195"/>
        <end position="304"/>
    </location>
</feature>
<feature type="region of interest" description="Disordered" evidence="3">
    <location>
        <begin position="406"/>
        <end position="499"/>
    </location>
</feature>
<feature type="compositionally biased region" description="Low complexity" evidence="3">
    <location>
        <begin position="12"/>
        <end position="28"/>
    </location>
</feature>
<feature type="compositionally biased region" description="Low complexity" evidence="3">
    <location>
        <begin position="195"/>
        <end position="224"/>
    </location>
</feature>
<feature type="compositionally biased region" description="Basic and acidic residues" evidence="3">
    <location>
        <begin position="251"/>
        <end position="262"/>
    </location>
</feature>
<feature type="compositionally biased region" description="Polar residues" evidence="3">
    <location>
        <begin position="263"/>
        <end position="279"/>
    </location>
</feature>
<feature type="compositionally biased region" description="Low complexity" evidence="3">
    <location>
        <begin position="280"/>
        <end position="304"/>
    </location>
</feature>
<feature type="compositionally biased region" description="Polar residues" evidence="3">
    <location>
        <begin position="406"/>
        <end position="425"/>
    </location>
</feature>
<feature type="compositionally biased region" description="Basic and acidic residues" evidence="3">
    <location>
        <begin position="438"/>
        <end position="447"/>
    </location>
</feature>
<feature type="compositionally biased region" description="Low complexity" evidence="3">
    <location>
        <begin position="480"/>
        <end position="499"/>
    </location>
</feature>
<proteinExistence type="evidence at transcript level"/>
<organism>
    <name type="scientific">Caenorhabditis elegans</name>
    <dbReference type="NCBI Taxonomy" id="6239"/>
    <lineage>
        <taxon>Eukaryota</taxon>
        <taxon>Metazoa</taxon>
        <taxon>Ecdysozoa</taxon>
        <taxon>Nematoda</taxon>
        <taxon>Chromadorea</taxon>
        <taxon>Rhabditida</taxon>
        <taxon>Rhabditina</taxon>
        <taxon>Rhabditomorpha</taxon>
        <taxon>Rhabditoidea</taxon>
        <taxon>Rhabditidae</taxon>
        <taxon>Peloderinae</taxon>
        <taxon>Caenorhabditis</taxon>
    </lineage>
</organism>